<gene>
    <name type="primary">MADS4</name>
    <name type="ordered locus">Os05g0423400</name>
    <name type="ordered locus">LOC_Os05g34940</name>
    <name type="ORF">OJ1212_B02.5</name>
</gene>
<keyword id="KW-0010">Activator</keyword>
<keyword id="KW-0025">Alternative splicing</keyword>
<keyword id="KW-0217">Developmental protein</keyword>
<keyword id="KW-0221">Differentiation</keyword>
<keyword id="KW-0238">DNA-binding</keyword>
<keyword id="KW-0287">Flowering</keyword>
<keyword id="KW-0539">Nucleus</keyword>
<keyword id="KW-1185">Reference proteome</keyword>
<keyword id="KW-0804">Transcription</keyword>
<keyword id="KW-0805">Transcription regulation</keyword>
<dbReference type="EMBL" id="L37527">
    <property type="protein sequence ID" value="AAC05723.1"/>
    <property type="molecule type" value="mRNA"/>
</dbReference>
<dbReference type="EMBL" id="AC109595">
    <property type="protein sequence ID" value="AAV24770.1"/>
    <property type="molecule type" value="Genomic_DNA"/>
</dbReference>
<dbReference type="EMBL" id="AP008211">
    <property type="protein sequence ID" value="BAF17504.1"/>
    <property type="molecule type" value="Genomic_DNA"/>
</dbReference>
<dbReference type="EMBL" id="AP014961">
    <property type="protein sequence ID" value="BAS94096.1"/>
    <property type="molecule type" value="Genomic_DNA"/>
</dbReference>
<dbReference type="EMBL" id="AK100233">
    <property type="protein sequence ID" value="BAG94502.1"/>
    <property type="molecule type" value="mRNA"/>
</dbReference>
<dbReference type="PIR" id="T03902">
    <property type="entry name" value="T03902"/>
</dbReference>
<dbReference type="SMR" id="Q40703"/>
<dbReference type="FunCoup" id="Q40703">
    <property type="interactions" value="950"/>
</dbReference>
<dbReference type="STRING" id="39947.Q40703"/>
<dbReference type="PaxDb" id="39947-Q40703"/>
<dbReference type="EnsemblPlants" id="Os05t0423400-01">
    <molecule id="Q40703-1"/>
    <property type="protein sequence ID" value="Os05t0423400-01"/>
    <property type="gene ID" value="Os05g0423400"/>
</dbReference>
<dbReference type="Gramene" id="Os05t0423400-01">
    <molecule id="Q40703-1"/>
    <property type="protein sequence ID" value="Os05t0423400-01"/>
    <property type="gene ID" value="Os05g0423400"/>
</dbReference>
<dbReference type="KEGG" id="dosa:Os05g0423400"/>
<dbReference type="eggNOG" id="KOG0014">
    <property type="taxonomic scope" value="Eukaryota"/>
</dbReference>
<dbReference type="HOGENOM" id="CLU_053053_0_4_1"/>
<dbReference type="InParanoid" id="Q40703"/>
<dbReference type="OMA" id="GYHQKGR"/>
<dbReference type="PlantReactome" id="R-OSA-9609102">
    <property type="pathway name" value="Flower development"/>
</dbReference>
<dbReference type="Proteomes" id="UP000000763">
    <property type="component" value="Chromosome 5"/>
</dbReference>
<dbReference type="Proteomes" id="UP000059680">
    <property type="component" value="Chromosome 5"/>
</dbReference>
<dbReference type="GO" id="GO:0005634">
    <property type="term" value="C:nucleus"/>
    <property type="evidence" value="ECO:0007669"/>
    <property type="project" value="UniProtKB-SubCell"/>
</dbReference>
<dbReference type="GO" id="GO:0000981">
    <property type="term" value="F:DNA-binding transcription factor activity, RNA polymerase II-specific"/>
    <property type="evidence" value="ECO:0000318"/>
    <property type="project" value="GO_Central"/>
</dbReference>
<dbReference type="GO" id="GO:0046983">
    <property type="term" value="F:protein dimerization activity"/>
    <property type="evidence" value="ECO:0007669"/>
    <property type="project" value="InterPro"/>
</dbReference>
<dbReference type="GO" id="GO:0000978">
    <property type="term" value="F:RNA polymerase II cis-regulatory region sequence-specific DNA binding"/>
    <property type="evidence" value="ECO:0000318"/>
    <property type="project" value="GO_Central"/>
</dbReference>
<dbReference type="GO" id="GO:0030154">
    <property type="term" value="P:cell differentiation"/>
    <property type="evidence" value="ECO:0007669"/>
    <property type="project" value="UniProtKB-KW"/>
</dbReference>
<dbReference type="GO" id="GO:0045944">
    <property type="term" value="P:positive regulation of transcription by RNA polymerase II"/>
    <property type="evidence" value="ECO:0007669"/>
    <property type="project" value="InterPro"/>
</dbReference>
<dbReference type="GO" id="GO:0006357">
    <property type="term" value="P:regulation of transcription by RNA polymerase II"/>
    <property type="evidence" value="ECO:0000318"/>
    <property type="project" value="GO_Central"/>
</dbReference>
<dbReference type="GO" id="GO:0010093">
    <property type="term" value="P:specification of floral organ identity"/>
    <property type="evidence" value="ECO:0000315"/>
    <property type="project" value="UniProtKB"/>
</dbReference>
<dbReference type="GO" id="GO:0010097">
    <property type="term" value="P:specification of stamen identity"/>
    <property type="evidence" value="ECO:0000304"/>
    <property type="project" value="AgBase"/>
</dbReference>
<dbReference type="CDD" id="cd00265">
    <property type="entry name" value="MADS_MEF2_like"/>
    <property type="match status" value="1"/>
</dbReference>
<dbReference type="Gene3D" id="3.40.1810.10">
    <property type="entry name" value="Transcription factor, MADS-box"/>
    <property type="match status" value="1"/>
</dbReference>
<dbReference type="InterPro" id="IPR050142">
    <property type="entry name" value="MADS-box/MEF2_TF"/>
</dbReference>
<dbReference type="InterPro" id="IPR033896">
    <property type="entry name" value="MEF2-like_N"/>
</dbReference>
<dbReference type="InterPro" id="IPR002487">
    <property type="entry name" value="TF_Kbox"/>
</dbReference>
<dbReference type="InterPro" id="IPR002100">
    <property type="entry name" value="TF_MADSbox"/>
</dbReference>
<dbReference type="InterPro" id="IPR036879">
    <property type="entry name" value="TF_MADSbox_sf"/>
</dbReference>
<dbReference type="PANTHER" id="PTHR48019">
    <property type="entry name" value="SERUM RESPONSE FACTOR HOMOLOG"/>
    <property type="match status" value="1"/>
</dbReference>
<dbReference type="Pfam" id="PF01486">
    <property type="entry name" value="K-box"/>
    <property type="match status" value="1"/>
</dbReference>
<dbReference type="Pfam" id="PF00319">
    <property type="entry name" value="SRF-TF"/>
    <property type="match status" value="1"/>
</dbReference>
<dbReference type="PRINTS" id="PR00404">
    <property type="entry name" value="MADSDOMAIN"/>
</dbReference>
<dbReference type="SMART" id="SM00432">
    <property type="entry name" value="MADS"/>
    <property type="match status" value="1"/>
</dbReference>
<dbReference type="SUPFAM" id="SSF55455">
    <property type="entry name" value="SRF-like"/>
    <property type="match status" value="1"/>
</dbReference>
<dbReference type="PROSITE" id="PS51297">
    <property type="entry name" value="K_BOX"/>
    <property type="match status" value="1"/>
</dbReference>
<dbReference type="PROSITE" id="PS50066">
    <property type="entry name" value="MADS_BOX_2"/>
    <property type="match status" value="1"/>
</dbReference>
<reference key="1">
    <citation type="journal article" date="1995" name="Plant Sci.">
        <title>Characterization of two rice MADS box genes homologous to GLOBOSA.</title>
        <authorList>
            <person name="Chung Y.-Y."/>
            <person name="Kim S.-R."/>
            <person name="Kang H.-G."/>
            <person name="Noh Y.-S."/>
            <person name="Park M.C."/>
            <person name="Finkel D."/>
            <person name="An G."/>
        </authorList>
    </citation>
    <scope>NUCLEOTIDE SEQUENCE [MRNA] (ISOFORM 1)</scope>
    <scope>TISSUE SPECIFICITY</scope>
    <source>
        <tissue>Immature flower</tissue>
    </source>
</reference>
<reference key="2">
    <citation type="submission" date="1998-03" db="EMBL/GenBank/DDBJ databases">
        <authorList>
            <person name="An G."/>
        </authorList>
    </citation>
    <scope>SEQUENCE REVISION</scope>
</reference>
<reference key="3">
    <citation type="journal article" date="2005" name="Mol. Genet. Genomics">
        <title>A fine physical map of the rice chromosome 5.</title>
        <authorList>
            <person name="Cheng C.-H."/>
            <person name="Chung M.C."/>
            <person name="Liu S.-M."/>
            <person name="Chen S.-K."/>
            <person name="Kao F.Y."/>
            <person name="Lin S.-J."/>
            <person name="Hsiao S.-H."/>
            <person name="Tseng I.C."/>
            <person name="Hsing Y.-I.C."/>
            <person name="Wu H.-P."/>
            <person name="Chen C.-S."/>
            <person name="Shaw J.-F."/>
            <person name="Wu J."/>
            <person name="Matsumoto T."/>
            <person name="Sasaki T."/>
            <person name="Chen H.-C."/>
            <person name="Chow T.-Y."/>
        </authorList>
    </citation>
    <scope>NUCLEOTIDE SEQUENCE [LARGE SCALE GENOMIC DNA]</scope>
    <source>
        <strain>cv. Nipponbare</strain>
    </source>
</reference>
<reference key="4">
    <citation type="journal article" date="2005" name="Nature">
        <title>The map-based sequence of the rice genome.</title>
        <authorList>
            <consortium name="International rice genome sequencing project (IRGSP)"/>
        </authorList>
    </citation>
    <scope>NUCLEOTIDE SEQUENCE [LARGE SCALE GENOMIC DNA]</scope>
    <source>
        <strain>cv. Nipponbare</strain>
    </source>
</reference>
<reference key="5">
    <citation type="journal article" date="2008" name="Nucleic Acids Res.">
        <title>The rice annotation project database (RAP-DB): 2008 update.</title>
        <authorList>
            <consortium name="The rice annotation project (RAP)"/>
        </authorList>
    </citation>
    <scope>GENOME REANNOTATION</scope>
    <source>
        <strain>cv. Nipponbare</strain>
    </source>
</reference>
<reference key="6">
    <citation type="journal article" date="2013" name="Rice">
        <title>Improvement of the Oryza sativa Nipponbare reference genome using next generation sequence and optical map data.</title>
        <authorList>
            <person name="Kawahara Y."/>
            <person name="de la Bastide M."/>
            <person name="Hamilton J.P."/>
            <person name="Kanamori H."/>
            <person name="McCombie W.R."/>
            <person name="Ouyang S."/>
            <person name="Schwartz D.C."/>
            <person name="Tanaka T."/>
            <person name="Wu J."/>
            <person name="Zhou S."/>
            <person name="Childs K.L."/>
            <person name="Davidson R.M."/>
            <person name="Lin H."/>
            <person name="Quesada-Ocampo L."/>
            <person name="Vaillancourt B."/>
            <person name="Sakai H."/>
            <person name="Lee S.S."/>
            <person name="Kim J."/>
            <person name="Numa H."/>
            <person name="Itoh T."/>
            <person name="Buell C.R."/>
            <person name="Matsumoto T."/>
        </authorList>
    </citation>
    <scope>GENOME REANNOTATION</scope>
    <source>
        <strain>cv. Nipponbare</strain>
    </source>
</reference>
<reference key="7">
    <citation type="journal article" date="2003" name="Science">
        <title>Collection, mapping, and annotation of over 28,000 cDNA clones from japonica rice.</title>
        <authorList>
            <consortium name="The rice full-length cDNA consortium"/>
        </authorList>
    </citation>
    <scope>NUCLEOTIDE SEQUENCE [LARGE SCALE MRNA] (ISOFORM 2)</scope>
    <source>
        <strain>cv. Nipponbare</strain>
    </source>
</reference>
<reference key="8">
    <citation type="journal article" date="1998" name="Plant Mol. Biol.">
        <title>Identification of class B and class C floral organ identity genes from rice plants.</title>
        <authorList>
            <person name="Kang H.-G."/>
            <person name="Jeon J.-S."/>
            <person name="Lee S."/>
            <person name="An G."/>
        </authorList>
    </citation>
    <scope>FUNCTION</scope>
</reference>
<reference key="9">
    <citation type="journal article" date="1999" name="Plant Mol. Biol.">
        <title>Identification of a rice APETALA3 homologue by yeast two-hybrid screening.</title>
        <authorList>
            <person name="Moon Y.-H."/>
            <person name="Jung J.-Y."/>
            <person name="Kang H.-G."/>
            <person name="An G."/>
        </authorList>
    </citation>
    <scope>TISSUE SPECIFICITY</scope>
    <scope>INTERACTION WITH MADS16</scope>
</reference>
<reference key="10">
    <citation type="journal article" date="2003" name="Planta">
        <title>Alteration of floral organ identity in rice through ectopic expression of OsMADS16.</title>
        <authorList>
            <person name="Lee S."/>
            <person name="Jeon J.-S."/>
            <person name="An K."/>
            <person name="Moon Y.-H."/>
            <person name="Lee S.-H."/>
            <person name="Chung Y.-Y."/>
            <person name="An G."/>
        </authorList>
    </citation>
    <scope>TISSUE SPECIFICITY</scope>
    <scope>INTERACTION WITH MADS16</scope>
</reference>
<feature type="chain" id="PRO_0000199500" description="MADS-box transcription factor 4">
    <location>
        <begin position="1"/>
        <end position="215"/>
    </location>
</feature>
<feature type="domain" description="MADS-box" evidence="1">
    <location>
        <begin position="1"/>
        <end position="61"/>
    </location>
</feature>
<feature type="domain" description="K-box" evidence="2">
    <location>
        <begin position="89"/>
        <end position="175"/>
    </location>
</feature>
<feature type="splice variant" id="VSP_015394" description="In isoform 1." evidence="7">
    <location>
        <begin position="64"/>
        <end position="68"/>
    </location>
</feature>
<feature type="sequence conflict" description="In Ref. 1; AAC05723." evidence="8" ref="1">
    <original>A</original>
    <variation>S</variation>
    <location>
        <position position="26"/>
    </location>
</feature>
<feature type="sequence conflict" description="In Ref. 1; AAC05723." evidence="8" ref="1">
    <original>A</original>
    <variation>R</variation>
    <location>
        <position position="41"/>
    </location>
</feature>
<organism>
    <name type="scientific">Oryza sativa subsp. japonica</name>
    <name type="common">Rice</name>
    <dbReference type="NCBI Taxonomy" id="39947"/>
    <lineage>
        <taxon>Eukaryota</taxon>
        <taxon>Viridiplantae</taxon>
        <taxon>Streptophyta</taxon>
        <taxon>Embryophyta</taxon>
        <taxon>Tracheophyta</taxon>
        <taxon>Spermatophyta</taxon>
        <taxon>Magnoliopsida</taxon>
        <taxon>Liliopsida</taxon>
        <taxon>Poales</taxon>
        <taxon>Poaceae</taxon>
        <taxon>BOP clade</taxon>
        <taxon>Oryzoideae</taxon>
        <taxon>Oryzeae</taxon>
        <taxon>Oryzinae</taxon>
        <taxon>Oryza</taxon>
        <taxon>Oryza sativa</taxon>
    </lineage>
</organism>
<sequence length="215" mass="24908">MGRGKIEIKRIENSTNRQVTFSKRRAGILKKAREIGVLCDAEVGVVIFSSAGKLSDYCTPKTTSVFPPLSRILEKYQTNSGKILWDEKHKSLSAEIDRVKKENDNMQIELRHMKGEDLNSLQPKELIAIEEALNNGQANLRDKMMDHWRMHKRNEKMLEDEHKMLAFRVHQQEVELSGGIRELELGYHHDDRDFAASMPFTFRVQPSHPNLQQEK</sequence>
<name>MADS4_ORYSJ</name>
<evidence type="ECO:0000255" key="1">
    <source>
        <dbReference type="PROSITE-ProRule" id="PRU00251"/>
    </source>
</evidence>
<evidence type="ECO:0000255" key="2">
    <source>
        <dbReference type="PROSITE-ProRule" id="PRU00629"/>
    </source>
</evidence>
<evidence type="ECO:0000269" key="3">
    <source>
    </source>
</evidence>
<evidence type="ECO:0000269" key="4">
    <source>
    </source>
</evidence>
<evidence type="ECO:0000269" key="5">
    <source>
    </source>
</evidence>
<evidence type="ECO:0000269" key="6">
    <source ref="1"/>
</evidence>
<evidence type="ECO:0000303" key="7">
    <source ref="1"/>
</evidence>
<evidence type="ECO:0000305" key="8"/>
<proteinExistence type="evidence at protein level"/>
<protein>
    <recommendedName>
        <fullName>MADS-box transcription factor 4</fullName>
    </recommendedName>
    <alternativeName>
        <fullName>OsMADS4</fullName>
    </alternativeName>
</protein>
<accession>Q40703</accession>
<accession>Q0DI19</accession>
<accession>Q60EP4</accession>
<comment type="function">
    <text evidence="5">Probable transcription factor involved in the development of floral organs. B-class protein required for normal development of lodicules and stamens (whorls 2 and 3). May function as a heterodimer with MADS16.</text>
</comment>
<comment type="subunit">
    <text>May interact with the K-box of MADS16.</text>
</comment>
<comment type="subcellular location">
    <subcellularLocation>
        <location evidence="8">Nucleus</location>
    </subcellularLocation>
</comment>
<comment type="alternative products">
    <event type="alternative splicing"/>
    <isoform>
        <id>Q40703-1</id>
        <name>2</name>
        <sequence type="displayed"/>
    </isoform>
    <isoform>
        <id>Q40703-2</id>
        <name>1</name>
        <sequence type="described" ref="VSP_015394"/>
    </isoform>
</comment>
<comment type="tissue specificity">
    <text evidence="3 4 6">Highly expressed in lodicules, at intermediate levels in stamens, and weakly in carpels. Expressed in pollen.</text>
</comment>
<comment type="miscellaneous">
    <text>Antisense inhibition of MADS4 expression transforms lodicules and stamens into palea/lemma-like and carpel-like organs, respectively.</text>
</comment>
<comment type="miscellaneous">
    <molecule>Isoform 2</molecule>
    <text>May be due to intron retention.</text>
</comment>